<gene>
    <name type="ORF">GG10411</name>
</gene>
<proteinExistence type="inferred from homology"/>
<dbReference type="EC" id="2.7.7.108" evidence="2"/>
<dbReference type="EC" id="3.1.4.-" evidence="1 2"/>
<dbReference type="EMBL" id="CH954177">
    <property type="protein sequence ID" value="EDV59072.1"/>
    <property type="molecule type" value="Genomic_DNA"/>
</dbReference>
<dbReference type="SMR" id="B3N5J3"/>
<dbReference type="EnsemblMetazoa" id="FBtr0130465">
    <property type="protein sequence ID" value="FBpp0128957"/>
    <property type="gene ID" value="FBgn0102720"/>
</dbReference>
<dbReference type="EnsemblMetazoa" id="XM_001969977.3">
    <property type="protein sequence ID" value="XP_001970013.1"/>
    <property type="gene ID" value="LOC6541728"/>
</dbReference>
<dbReference type="GeneID" id="6541728"/>
<dbReference type="KEGG" id="der:6541728"/>
<dbReference type="CTD" id="33897"/>
<dbReference type="eggNOG" id="KOG3824">
    <property type="taxonomic scope" value="Eukaryota"/>
</dbReference>
<dbReference type="HOGENOM" id="CLU_040460_0_0_1"/>
<dbReference type="OMA" id="QLRCQLW"/>
<dbReference type="OrthoDB" id="439046at2759"/>
<dbReference type="PhylomeDB" id="B3N5J3"/>
<dbReference type="Proteomes" id="UP000008711">
    <property type="component" value="Unassembled WGS sequence"/>
</dbReference>
<dbReference type="GO" id="GO:0005886">
    <property type="term" value="C:plasma membrane"/>
    <property type="evidence" value="ECO:0007669"/>
    <property type="project" value="EnsemblMetazoa"/>
</dbReference>
<dbReference type="GO" id="GO:0070733">
    <property type="term" value="F:AMPylase activity"/>
    <property type="evidence" value="ECO:0000250"/>
    <property type="project" value="UniProtKB"/>
</dbReference>
<dbReference type="GO" id="GO:0005524">
    <property type="term" value="F:ATP binding"/>
    <property type="evidence" value="ECO:0007669"/>
    <property type="project" value="UniProtKB-KW"/>
</dbReference>
<dbReference type="GO" id="GO:0030544">
    <property type="term" value="F:Hsp70 protein binding"/>
    <property type="evidence" value="ECO:0007669"/>
    <property type="project" value="EnsemblMetazoa"/>
</dbReference>
<dbReference type="GO" id="GO:0044603">
    <property type="term" value="F:protein adenylylhydrolase activity"/>
    <property type="evidence" value="ECO:0007669"/>
    <property type="project" value="EnsemblMetazoa"/>
</dbReference>
<dbReference type="GO" id="GO:0042803">
    <property type="term" value="F:protein homodimerization activity"/>
    <property type="evidence" value="ECO:0007669"/>
    <property type="project" value="EnsemblMetazoa"/>
</dbReference>
<dbReference type="GO" id="GO:0050908">
    <property type="term" value="P:detection of light stimulus involved in visual perception"/>
    <property type="evidence" value="ECO:0007669"/>
    <property type="project" value="EnsemblMetazoa"/>
</dbReference>
<dbReference type="GO" id="GO:0051608">
    <property type="term" value="P:histamine transport"/>
    <property type="evidence" value="ECO:0007669"/>
    <property type="project" value="EnsemblMetazoa"/>
</dbReference>
<dbReference type="GO" id="GO:0018117">
    <property type="term" value="P:protein adenylylation"/>
    <property type="evidence" value="ECO:0000250"/>
    <property type="project" value="UniProtKB"/>
</dbReference>
<dbReference type="GO" id="GO:0034976">
    <property type="term" value="P:response to endoplasmic reticulum stress"/>
    <property type="evidence" value="ECO:0007669"/>
    <property type="project" value="EnsemblMetazoa"/>
</dbReference>
<dbReference type="GO" id="GO:0007632">
    <property type="term" value="P:visual behavior"/>
    <property type="evidence" value="ECO:0007669"/>
    <property type="project" value="EnsemblMetazoa"/>
</dbReference>
<dbReference type="FunFam" id="1.10.3290.10:FF:000001">
    <property type="entry name" value="adenosine monophosphate-protein transferase FICD"/>
    <property type="match status" value="1"/>
</dbReference>
<dbReference type="FunFam" id="1.25.40.10:FF:000522">
    <property type="entry name" value="Protein adenylyltransferase Fic"/>
    <property type="match status" value="1"/>
</dbReference>
<dbReference type="Gene3D" id="1.10.3290.10">
    <property type="entry name" value="Fido-like domain"/>
    <property type="match status" value="1"/>
</dbReference>
<dbReference type="Gene3D" id="1.25.40.10">
    <property type="entry name" value="Tetratricopeptide repeat domain"/>
    <property type="match status" value="1"/>
</dbReference>
<dbReference type="InterPro" id="IPR003812">
    <property type="entry name" value="Fido"/>
</dbReference>
<dbReference type="InterPro" id="IPR036597">
    <property type="entry name" value="Fido-like_dom_sf"/>
</dbReference>
<dbReference type="InterPro" id="IPR040198">
    <property type="entry name" value="Fido_containing"/>
</dbReference>
<dbReference type="InterPro" id="IPR011990">
    <property type="entry name" value="TPR-like_helical_dom_sf"/>
</dbReference>
<dbReference type="PANTHER" id="PTHR13504">
    <property type="entry name" value="FIDO DOMAIN-CONTAINING PROTEIN DDB_G0283145"/>
    <property type="match status" value="1"/>
</dbReference>
<dbReference type="PANTHER" id="PTHR13504:SF34">
    <property type="entry name" value="PROTEIN ADENYLYLTRANSFERASE FICD"/>
    <property type="match status" value="1"/>
</dbReference>
<dbReference type="Pfam" id="PF02661">
    <property type="entry name" value="Fic"/>
    <property type="match status" value="1"/>
</dbReference>
<dbReference type="SUPFAM" id="SSF140931">
    <property type="entry name" value="Fic-like"/>
    <property type="match status" value="1"/>
</dbReference>
<dbReference type="SUPFAM" id="SSF48452">
    <property type="entry name" value="TPR-like"/>
    <property type="match status" value="1"/>
</dbReference>
<dbReference type="PROSITE" id="PS51459">
    <property type="entry name" value="FIDO"/>
    <property type="match status" value="1"/>
</dbReference>
<dbReference type="PROSITE" id="PS50293">
    <property type="entry name" value="TPR_REGION"/>
    <property type="match status" value="1"/>
</dbReference>
<keyword id="KW-0067">ATP-binding</keyword>
<keyword id="KW-0378">Hydrolase</keyword>
<keyword id="KW-0472">Membrane</keyword>
<keyword id="KW-0547">Nucleotide-binding</keyword>
<keyword id="KW-0548">Nucleotidyltransferase</keyword>
<keyword id="KW-0677">Repeat</keyword>
<keyword id="KW-0802">TPR repeat</keyword>
<keyword id="KW-0808">Transferase</keyword>
<keyword id="KW-0812">Transmembrane</keyword>
<keyword id="KW-1133">Transmembrane helix</keyword>
<name>FICD_DROER</name>
<evidence type="ECO:0000250" key="1">
    <source>
        <dbReference type="UniProtKB" id="A0A061I403"/>
    </source>
</evidence>
<evidence type="ECO:0000250" key="2">
    <source>
        <dbReference type="UniProtKB" id="Q8SWV6"/>
    </source>
</evidence>
<evidence type="ECO:0000250" key="3">
    <source>
        <dbReference type="UniProtKB" id="Q9BVA6"/>
    </source>
</evidence>
<evidence type="ECO:0000255" key="4"/>
<evidence type="ECO:0000255" key="5">
    <source>
        <dbReference type="PROSITE-ProRule" id="PRU00791"/>
    </source>
</evidence>
<evidence type="ECO:0000256" key="6">
    <source>
        <dbReference type="SAM" id="MobiDB-lite"/>
    </source>
</evidence>
<evidence type="ECO:0000305" key="7"/>
<protein>
    <recommendedName>
        <fullName>Protein adenylyltransferase Fic</fullName>
        <ecNumber evidence="2">2.7.7.108</ecNumber>
    </recommendedName>
    <alternativeName>
        <fullName evidence="7">De-AMPylase Fic</fullName>
        <ecNumber evidence="1 2">3.1.4.-</ecNumber>
    </alternativeName>
</protein>
<comment type="function">
    <text evidence="1 2">Protein that can both mediate the addition of adenosine 5'-monophosphate (AMP) to specific residues of target proteins (AMPylation), and the removal of the same modification from target proteins (de-AMPylation), depending on the context (By similarity). The side chain of Glu-250 determines which of the two opposing activities (AMPylase or de-AMPylase) will take place (By similarity). Acts as a key regulator of the unfolded protein response (UPR) by mediating AMPylation or de-AMPylation of Hsc70-3/BiP. In unstressed cells, acts as an adenylyltransferase by mediating AMPylation of Hsc70-3/BiP at 'Thr-518', thereby inactivating it. In response to endoplasmic reticulum stress, acts as a phosphodiesterase by mediating removal of ATP (de-AMPylation) from Hsc70-3/BiP at 'Thr-518', leading to restore HSPA5/BiP activity (By similarity).</text>
</comment>
<comment type="catalytic activity">
    <reaction evidence="3">
        <text>L-tyrosyl-[protein] + ATP = O-(5'-adenylyl)-L-tyrosyl-[protein] + diphosphate</text>
        <dbReference type="Rhea" id="RHEA:54288"/>
        <dbReference type="Rhea" id="RHEA-COMP:10136"/>
        <dbReference type="Rhea" id="RHEA-COMP:13846"/>
        <dbReference type="ChEBI" id="CHEBI:30616"/>
        <dbReference type="ChEBI" id="CHEBI:33019"/>
        <dbReference type="ChEBI" id="CHEBI:46858"/>
        <dbReference type="ChEBI" id="CHEBI:83624"/>
        <dbReference type="EC" id="2.7.7.108"/>
    </reaction>
</comment>
<comment type="catalytic activity">
    <reaction evidence="2">
        <text>L-threonyl-[protein] + ATP = 3-O-(5'-adenylyl)-L-threonyl-[protein] + diphosphate</text>
        <dbReference type="Rhea" id="RHEA:54292"/>
        <dbReference type="Rhea" id="RHEA-COMP:11060"/>
        <dbReference type="Rhea" id="RHEA-COMP:13847"/>
        <dbReference type="ChEBI" id="CHEBI:30013"/>
        <dbReference type="ChEBI" id="CHEBI:30616"/>
        <dbReference type="ChEBI" id="CHEBI:33019"/>
        <dbReference type="ChEBI" id="CHEBI:138113"/>
        <dbReference type="EC" id="2.7.7.108"/>
    </reaction>
</comment>
<comment type="catalytic activity">
    <reaction evidence="2">
        <text>3-O-(5'-adenylyl)-L-threonyl-[protein] + H2O = L-threonyl-[protein] + AMP + H(+)</text>
        <dbReference type="Rhea" id="RHEA:55932"/>
        <dbReference type="Rhea" id="RHEA-COMP:11060"/>
        <dbReference type="Rhea" id="RHEA-COMP:13847"/>
        <dbReference type="ChEBI" id="CHEBI:15377"/>
        <dbReference type="ChEBI" id="CHEBI:15378"/>
        <dbReference type="ChEBI" id="CHEBI:30013"/>
        <dbReference type="ChEBI" id="CHEBI:138113"/>
        <dbReference type="ChEBI" id="CHEBI:456215"/>
    </reaction>
</comment>
<comment type="activity regulation">
    <text evidence="1 3">The side chain of Glu-250 determines which of the two opposing activities (AMPylase or de-AMPylase) will take place. In response to endoplasmic reticulum stress, mediates de-AMPylase activity (By similarity). Adenylyltransferase activity is inhibited by the inhibitory helix present at the N-terminus: Glu-250 binds ATP and competes with ATP-binding at Arg-389, thereby preventing adenylyltransferase activity (By similarity). In unstressed cells, disengagement of Glu-250 promotes adenylyltransferase activity (By similarity). Activation dissociates ATP-binding from Glu-250, allowing ordered binding of the entire ATP moiety with the alpha-phosphate in an orientation that is productive for accepting an incoming target hydroxyl side chain (By similarity).</text>
</comment>
<comment type="subunit">
    <text evidence="2">Homodimer.</text>
</comment>
<comment type="subcellular location">
    <subcellularLocation>
        <location evidence="2">Membrane</location>
        <topology evidence="2">Single-pass membrane protein</topology>
    </subcellularLocation>
</comment>
<comment type="domain">
    <text evidence="3">The fido domain mediates the adenylyltransferase activity.</text>
</comment>
<comment type="similarity">
    <text evidence="7">Belongs to the fic family.</text>
</comment>
<reference key="1">
    <citation type="journal article" date="2007" name="Nature">
        <title>Evolution of genes and genomes on the Drosophila phylogeny.</title>
        <authorList>
            <consortium name="Drosophila 12 genomes consortium"/>
        </authorList>
    </citation>
    <scope>NUCLEOTIDE SEQUENCE [LARGE SCALE GENOMIC DNA]</scope>
    <source>
        <strain>Tucson 14021-0224.01</strain>
    </source>
</reference>
<accession>B3N5J3</accession>
<feature type="chain" id="PRO_0000381783" description="Protein adenylyltransferase Fic">
    <location>
        <begin position="1"/>
        <end position="495"/>
    </location>
</feature>
<feature type="transmembrane region" description="Helical" evidence="4">
    <location>
        <begin position="36"/>
        <end position="58"/>
    </location>
</feature>
<feature type="repeat" description="TPR 1">
    <location>
        <begin position="121"/>
        <end position="154"/>
    </location>
</feature>
<feature type="repeat" description="TPR 2">
    <location>
        <begin position="155"/>
        <end position="189"/>
    </location>
</feature>
<feature type="domain" description="Fido" evidence="5">
    <location>
        <begin position="300"/>
        <end position="435"/>
    </location>
</feature>
<feature type="region of interest" description="Disordered" evidence="6">
    <location>
        <begin position="1"/>
        <end position="23"/>
    </location>
</feature>
<feature type="short sequence motif" description="Inhibitory (S/T)XXXE(G/N) motif">
    <location>
        <begin position="246"/>
        <end position="251"/>
    </location>
</feature>
<feature type="active site" evidence="1">
    <location>
        <position position="378"/>
    </location>
</feature>
<feature type="binding site" evidence="3">
    <location>
        <position position="250"/>
    </location>
    <ligand>
        <name>ATP</name>
        <dbReference type="ChEBI" id="CHEBI:30616"/>
    </ligand>
</feature>
<feature type="binding site" evidence="3">
    <location>
        <begin position="331"/>
        <end position="334"/>
    </location>
    <ligand>
        <name>ATP</name>
        <dbReference type="ChEBI" id="CHEBI:30616"/>
    </ligand>
</feature>
<feature type="binding site" evidence="3">
    <location>
        <begin position="382"/>
        <end position="389"/>
    </location>
    <ligand>
        <name>ATP</name>
        <dbReference type="ChEBI" id="CHEBI:30616"/>
    </ligand>
</feature>
<feature type="binding site" evidence="3">
    <location>
        <begin position="414"/>
        <end position="415"/>
    </location>
    <ligand>
        <name>ATP</name>
        <dbReference type="ChEBI" id="CHEBI:30616"/>
    </ligand>
</feature>
<feature type="binding site" evidence="3">
    <location>
        <position position="422"/>
    </location>
    <ligand>
        <name>ATP</name>
        <dbReference type="ChEBI" id="CHEBI:30616"/>
    </ligand>
</feature>
<feature type="site" description="Important for autoinhibition of adenylyltransferase activity" evidence="3">
    <location>
        <position position="250"/>
    </location>
</feature>
<sequence length="495" mass="56201">MGTEAEPPSPPSPPAQQQEQANPPVWNAQNQKPARLYRLVLFFIAGSLTAWMFHAFSSSNLAWKLRQLHHLPTAHYLQTRDEFALYSVEELNAFKEFYDKSVSDSVGASFTEAEQTSINEALVSLRMAQDMYLTGKDDKAARLFEHALALAPRHPEVLLRYGEFLEHNQRNIVLADQYYFQALTISPSNSEALANRQRTADVVQNLDQRRLESLDSKRDALSAIHESNAALRRAKKEAYFQHIYHSVGIEGNTMTLAQTRSILETRMAVDGKSIDEHNEILGMDLAMKYINASLVQKIEITIKDILELHRRVMGHVDPIEGGEFRRNQVYVGGHIPPGPGDLALLMQRFERWLNSEHISTLHPVNYAALAHYKLVHIHPFIDGNGRTSRLLMNTLLMRAGYPPVIIPKQQRSKYYHFLKLANEGDIRPFVRFIADCTEKTLDLYLWATSDLPQQIPMLIQTESEAGERLAQMQSPNVAQRSSILEFYESGSGALP</sequence>
<organism>
    <name type="scientific">Drosophila erecta</name>
    <name type="common">Fruit fly</name>
    <dbReference type="NCBI Taxonomy" id="7220"/>
    <lineage>
        <taxon>Eukaryota</taxon>
        <taxon>Metazoa</taxon>
        <taxon>Ecdysozoa</taxon>
        <taxon>Arthropoda</taxon>
        <taxon>Hexapoda</taxon>
        <taxon>Insecta</taxon>
        <taxon>Pterygota</taxon>
        <taxon>Neoptera</taxon>
        <taxon>Endopterygota</taxon>
        <taxon>Diptera</taxon>
        <taxon>Brachycera</taxon>
        <taxon>Muscomorpha</taxon>
        <taxon>Ephydroidea</taxon>
        <taxon>Drosophilidae</taxon>
        <taxon>Drosophila</taxon>
        <taxon>Sophophora</taxon>
    </lineage>
</organism>